<sequence>MEKRNETGNNRLKRSNNRGKSKKDWKDASVETTPRETSVDEDNTSVFEDVEAQDSRQKRFSSTLEGNRFEELRSLREKEREVAIQNGLIDDPTKPRQLDEAVTFVGTCPDMCPEYEREQREYQNNLERWEINPETGRVDKNLAVKAFHRPAAGNEQALPSDVRPPPVLKKSLDYLVDKIVCGPDPLENTHFFVRDRTRSIRQDFTLQNCRDLDAVACHERIARYHILCIHQLCEKKQFSAQQEVEQLRKGILQSLCEFYDDLRKVKIRCPNEPEFRSYAIITHLRDPDVVRQSQILPIEIFDDQRVQLALRLSALAQKNNERVGHILPRNTEACPNLYTRFFKLVQSPAVTYLMACLLESHFMSIRKGALKAMRKAFMSAHANFPCGDLKRILHFDTVEQAASFSRYYGLEVSDDNGELSINLNKTAFFNDSKPDFRQLFSQTLVESKLQNRSFADIINGSRYNIDRVSPNTAFSTNIPLSLPFANKEPQPIAGFKKNTPETSVVSKNLSTFNGKFNVNAPVFTPRSFPTKPFSATDISSVQPTNLPNGSTNGTETFIPPVQNSITSNKEAVKPIKNKPKPISFESLSAVGNLIISDSLSRIVRQILQNLYTEWVHEKTNLVFATMFRTIFREVLLDGIASEVYLKSLKKHAISQISVRAHHSWVKKQEKMMLEMREKNRQEKYFSVLNSVVKAESSNITRLPIKRTFYGDTRNLDKASEKLRAEHDRTRRLWKPVLMDSLFSNLQKFPVYEDWHLLIFNASTSSMMKTWLCAKFSLKETNKTSFWHSSYNLFNRQYHVDMPDNVSDLPQTRLCYGACVYNVGLLDEEKRKDLANSDLNSSPKLIQGNDSRSAHESSANKLFSFVHDISRLTITKLPLLLIFWSDSNLDMQGITQKYRFLELITSTWSAISSIHVLTITNDRDMDLEHSLKVLLDNVTVEKSPFAQLEELEVVRKKREAEIEASSKTVKRLASNNKFLTDSNVEGLLEAPTSLENSLVEDDKWASLRQKIKAARDLLKKVETFY</sequence>
<name>SAC31_SCHPO</name>
<gene>
    <name type="ORF">SPCC576.05</name>
</gene>
<dbReference type="EMBL" id="CU329672">
    <property type="protein sequence ID" value="CAA21184.1"/>
    <property type="molecule type" value="Genomic_DNA"/>
</dbReference>
<dbReference type="PIR" id="T41415">
    <property type="entry name" value="T41415"/>
</dbReference>
<dbReference type="SMR" id="O74889"/>
<dbReference type="BioGRID" id="276122">
    <property type="interactions" value="2"/>
</dbReference>
<dbReference type="FunCoup" id="O74889">
    <property type="interactions" value="242"/>
</dbReference>
<dbReference type="STRING" id="284812.O74889"/>
<dbReference type="iPTMnet" id="O74889"/>
<dbReference type="PaxDb" id="4896-SPCC576.05.1"/>
<dbReference type="EnsemblFungi" id="SPCC576.05.1">
    <property type="protein sequence ID" value="SPCC576.05.1:pep"/>
    <property type="gene ID" value="SPCC576.05"/>
</dbReference>
<dbReference type="KEGG" id="spo:2539561"/>
<dbReference type="PomBase" id="SPCC576.05"/>
<dbReference type="VEuPathDB" id="FungiDB:SPCC576.05"/>
<dbReference type="eggNOG" id="KOG1860">
    <property type="taxonomic scope" value="Eukaryota"/>
</dbReference>
<dbReference type="HOGENOM" id="CLU_298457_0_0_1"/>
<dbReference type="InParanoid" id="O74889"/>
<dbReference type="OMA" id="CYGACIY"/>
<dbReference type="PhylomeDB" id="O74889"/>
<dbReference type="PRO" id="PR:O74889"/>
<dbReference type="Proteomes" id="UP000002485">
    <property type="component" value="Chromosome III"/>
</dbReference>
<dbReference type="GO" id="GO:0005737">
    <property type="term" value="C:cytoplasm"/>
    <property type="evidence" value="ECO:0000318"/>
    <property type="project" value="GO_Central"/>
</dbReference>
<dbReference type="GO" id="GO:0005829">
    <property type="term" value="C:cytosol"/>
    <property type="evidence" value="ECO:0007005"/>
    <property type="project" value="PomBase"/>
</dbReference>
<dbReference type="GO" id="GO:0005635">
    <property type="term" value="C:nuclear envelope"/>
    <property type="evidence" value="ECO:0007005"/>
    <property type="project" value="PomBase"/>
</dbReference>
<dbReference type="GO" id="GO:0005643">
    <property type="term" value="C:nuclear pore"/>
    <property type="evidence" value="ECO:0000266"/>
    <property type="project" value="PomBase"/>
</dbReference>
<dbReference type="GO" id="GO:0005634">
    <property type="term" value="C:nucleus"/>
    <property type="evidence" value="ECO:0007005"/>
    <property type="project" value="PomBase"/>
</dbReference>
<dbReference type="GO" id="GO:0070390">
    <property type="term" value="C:transcription export complex 2"/>
    <property type="evidence" value="ECO:0000318"/>
    <property type="project" value="GO_Central"/>
</dbReference>
<dbReference type="GO" id="GO:0006406">
    <property type="term" value="P:mRNA export from nucleus"/>
    <property type="evidence" value="ECO:0000318"/>
    <property type="project" value="GO_Central"/>
</dbReference>
<dbReference type="GO" id="GO:0006611">
    <property type="term" value="P:protein export from nucleus"/>
    <property type="evidence" value="ECO:0000266"/>
    <property type="project" value="PomBase"/>
</dbReference>
<dbReference type="GO" id="GO:0042274">
    <property type="term" value="P:ribosomal small subunit biogenesis"/>
    <property type="evidence" value="ECO:0000266"/>
    <property type="project" value="PomBase"/>
</dbReference>
<dbReference type="FunFam" id="1.25.40.990:FF:000008">
    <property type="entry name" value="Nuclear mRNA export protein SAC3"/>
    <property type="match status" value="1"/>
</dbReference>
<dbReference type="Gene3D" id="1.25.40.990">
    <property type="match status" value="1"/>
</dbReference>
<dbReference type="InterPro" id="IPR000717">
    <property type="entry name" value="PCI_dom"/>
</dbReference>
<dbReference type="InterPro" id="IPR017173">
    <property type="entry name" value="Sac3"/>
</dbReference>
<dbReference type="InterPro" id="IPR045107">
    <property type="entry name" value="SAC3/GANP/THP3"/>
</dbReference>
<dbReference type="InterPro" id="IPR005062">
    <property type="entry name" value="SAC3/GANP/THP3_conserved"/>
</dbReference>
<dbReference type="PANTHER" id="PTHR12436">
    <property type="entry name" value="80 KDA MCM3-ASSOCIATED PROTEIN"/>
    <property type="match status" value="1"/>
</dbReference>
<dbReference type="PANTHER" id="PTHR12436:SF37">
    <property type="entry name" value="SAC3 FAMILY PROTEIN 1"/>
    <property type="match status" value="1"/>
</dbReference>
<dbReference type="Pfam" id="PF03399">
    <property type="entry name" value="SAC3_GANP"/>
    <property type="match status" value="1"/>
</dbReference>
<dbReference type="PIRSF" id="PIRSF037320">
    <property type="entry name" value="mRNA_export_factor_Sac3"/>
    <property type="match status" value="1"/>
</dbReference>
<dbReference type="PROSITE" id="PS50250">
    <property type="entry name" value="PCI"/>
    <property type="match status" value="1"/>
</dbReference>
<evidence type="ECO:0000255" key="1"/>
<evidence type="ECO:0000255" key="2">
    <source>
        <dbReference type="PROSITE-ProRule" id="PRU01185"/>
    </source>
</evidence>
<evidence type="ECO:0000256" key="3">
    <source>
        <dbReference type="SAM" id="MobiDB-lite"/>
    </source>
</evidence>
<evidence type="ECO:0000269" key="4">
    <source>
    </source>
</evidence>
<evidence type="ECO:0000269" key="5">
    <source>
    </source>
</evidence>
<evidence type="ECO:0000305" key="6"/>
<evidence type="ECO:0000312" key="7">
    <source>
        <dbReference type="EMBL" id="CAA21184.1"/>
    </source>
</evidence>
<organism>
    <name type="scientific">Schizosaccharomyces pombe (strain 972 / ATCC 24843)</name>
    <name type="common">Fission yeast</name>
    <dbReference type="NCBI Taxonomy" id="284812"/>
    <lineage>
        <taxon>Eukaryota</taxon>
        <taxon>Fungi</taxon>
        <taxon>Dikarya</taxon>
        <taxon>Ascomycota</taxon>
        <taxon>Taphrinomycotina</taxon>
        <taxon>Schizosaccharomycetes</taxon>
        <taxon>Schizosaccharomycetales</taxon>
        <taxon>Schizosaccharomycetaceae</taxon>
        <taxon>Schizosaccharomyces</taxon>
    </lineage>
</organism>
<comment type="subcellular location">
    <subcellularLocation>
        <location evidence="4">Cytoplasm</location>
    </subcellularLocation>
    <subcellularLocation>
        <location evidence="4">Nucleus envelope</location>
    </subcellularLocation>
</comment>
<comment type="similarity">
    <text evidence="1">Belongs to the SAC3 family.</text>
</comment>
<keyword id="KW-0175">Coiled coil</keyword>
<keyword id="KW-0963">Cytoplasm</keyword>
<keyword id="KW-0539">Nucleus</keyword>
<keyword id="KW-0597">Phosphoprotein</keyword>
<keyword id="KW-1185">Reference proteome</keyword>
<accession>O74889</accession>
<proteinExistence type="evidence at protein level"/>
<reference evidence="7" key="1">
    <citation type="journal article" date="2002" name="Nature">
        <title>The genome sequence of Schizosaccharomyces pombe.</title>
        <authorList>
            <person name="Wood V."/>
            <person name="Gwilliam R."/>
            <person name="Rajandream M.A."/>
            <person name="Lyne M.H."/>
            <person name="Lyne R."/>
            <person name="Stewart A."/>
            <person name="Sgouros J.G."/>
            <person name="Peat N."/>
            <person name="Hayles J."/>
            <person name="Baker S.G."/>
            <person name="Basham D."/>
            <person name="Bowman S."/>
            <person name="Brooks K."/>
            <person name="Brown D."/>
            <person name="Brown S."/>
            <person name="Chillingworth T."/>
            <person name="Churcher C.M."/>
            <person name="Collins M."/>
            <person name="Connor R."/>
            <person name="Cronin A."/>
            <person name="Davis P."/>
            <person name="Feltwell T."/>
            <person name="Fraser A."/>
            <person name="Gentles S."/>
            <person name="Goble A."/>
            <person name="Hamlin N."/>
            <person name="Harris D.E."/>
            <person name="Hidalgo J."/>
            <person name="Hodgson G."/>
            <person name="Holroyd S."/>
            <person name="Hornsby T."/>
            <person name="Howarth S."/>
            <person name="Huckle E.J."/>
            <person name="Hunt S."/>
            <person name="Jagels K."/>
            <person name="James K.D."/>
            <person name="Jones L."/>
            <person name="Jones M."/>
            <person name="Leather S."/>
            <person name="McDonald S."/>
            <person name="McLean J."/>
            <person name="Mooney P."/>
            <person name="Moule S."/>
            <person name="Mungall K.L."/>
            <person name="Murphy L.D."/>
            <person name="Niblett D."/>
            <person name="Odell C."/>
            <person name="Oliver K."/>
            <person name="O'Neil S."/>
            <person name="Pearson D."/>
            <person name="Quail M.A."/>
            <person name="Rabbinowitsch E."/>
            <person name="Rutherford K.M."/>
            <person name="Rutter S."/>
            <person name="Saunders D."/>
            <person name="Seeger K."/>
            <person name="Sharp S."/>
            <person name="Skelton J."/>
            <person name="Simmonds M.N."/>
            <person name="Squares R."/>
            <person name="Squares S."/>
            <person name="Stevens K."/>
            <person name="Taylor K."/>
            <person name="Taylor R.G."/>
            <person name="Tivey A."/>
            <person name="Walsh S.V."/>
            <person name="Warren T."/>
            <person name="Whitehead S."/>
            <person name="Woodward J.R."/>
            <person name="Volckaert G."/>
            <person name="Aert R."/>
            <person name="Robben J."/>
            <person name="Grymonprez B."/>
            <person name="Weltjens I."/>
            <person name="Vanstreels E."/>
            <person name="Rieger M."/>
            <person name="Schaefer M."/>
            <person name="Mueller-Auer S."/>
            <person name="Gabel C."/>
            <person name="Fuchs M."/>
            <person name="Duesterhoeft A."/>
            <person name="Fritzc C."/>
            <person name="Holzer E."/>
            <person name="Moestl D."/>
            <person name="Hilbert H."/>
            <person name="Borzym K."/>
            <person name="Langer I."/>
            <person name="Beck A."/>
            <person name="Lehrach H."/>
            <person name="Reinhardt R."/>
            <person name="Pohl T.M."/>
            <person name="Eger P."/>
            <person name="Zimmermann W."/>
            <person name="Wedler H."/>
            <person name="Wambutt R."/>
            <person name="Purnelle B."/>
            <person name="Goffeau A."/>
            <person name="Cadieu E."/>
            <person name="Dreano S."/>
            <person name="Gloux S."/>
            <person name="Lelaure V."/>
            <person name="Mottier S."/>
            <person name="Galibert F."/>
            <person name="Aves S.J."/>
            <person name="Xiang Z."/>
            <person name="Hunt C."/>
            <person name="Moore K."/>
            <person name="Hurst S.M."/>
            <person name="Lucas M."/>
            <person name="Rochet M."/>
            <person name="Gaillardin C."/>
            <person name="Tallada V.A."/>
            <person name="Garzon A."/>
            <person name="Thode G."/>
            <person name="Daga R.R."/>
            <person name="Cruzado L."/>
            <person name="Jimenez J."/>
            <person name="Sanchez M."/>
            <person name="del Rey F."/>
            <person name="Benito J."/>
            <person name="Dominguez A."/>
            <person name="Revuelta J.L."/>
            <person name="Moreno S."/>
            <person name="Armstrong J."/>
            <person name="Forsburg S.L."/>
            <person name="Cerutti L."/>
            <person name="Lowe T."/>
            <person name="McCombie W.R."/>
            <person name="Paulsen I."/>
            <person name="Potashkin J."/>
            <person name="Shpakovski G.V."/>
            <person name="Ussery D."/>
            <person name="Barrell B.G."/>
            <person name="Nurse P."/>
        </authorList>
    </citation>
    <scope>NUCLEOTIDE SEQUENCE [LARGE SCALE GENOMIC DNA]</scope>
    <source>
        <strain>972 / ATCC 24843</strain>
    </source>
</reference>
<reference evidence="6" key="2">
    <citation type="journal article" date="2006" name="Nat. Biotechnol.">
        <title>ORFeome cloning and global analysis of protein localization in the fission yeast Schizosaccharomyces pombe.</title>
        <authorList>
            <person name="Matsuyama A."/>
            <person name="Arai R."/>
            <person name="Yashiroda Y."/>
            <person name="Shirai A."/>
            <person name="Kamata A."/>
            <person name="Sekido S."/>
            <person name="Kobayashi Y."/>
            <person name="Hashimoto A."/>
            <person name="Hamamoto M."/>
            <person name="Hiraoka Y."/>
            <person name="Horinouchi S."/>
            <person name="Yoshida M."/>
        </authorList>
    </citation>
    <scope>SUBCELLULAR LOCATION [LARGE SCALE ANALYSIS]</scope>
</reference>
<reference key="3">
    <citation type="journal article" date="2008" name="J. Proteome Res.">
        <title>Phosphoproteome analysis of fission yeast.</title>
        <authorList>
            <person name="Wilson-Grady J.T."/>
            <person name="Villen J."/>
            <person name="Gygi S.P."/>
        </authorList>
    </citation>
    <scope>PHOSPHORYLATION [LARGE SCALE ANALYSIS] AT SER-841</scope>
    <scope>IDENTIFICATION BY MASS SPECTROMETRY</scope>
</reference>
<feature type="chain" id="PRO_0000316863" description="SAC3 family protein 1">
    <location>
        <begin position="1"/>
        <end position="1024"/>
    </location>
</feature>
<feature type="domain" description="PCI" evidence="2">
    <location>
        <begin position="243"/>
        <end position="433"/>
    </location>
</feature>
<feature type="region of interest" description="Disordered" evidence="3">
    <location>
        <begin position="1"/>
        <end position="62"/>
    </location>
</feature>
<feature type="coiled-coil region" evidence="1">
    <location>
        <begin position="945"/>
        <end position="1022"/>
    </location>
</feature>
<feature type="compositionally biased region" description="Basic residues" evidence="3">
    <location>
        <begin position="11"/>
        <end position="21"/>
    </location>
</feature>
<feature type="compositionally biased region" description="Basic and acidic residues" evidence="3">
    <location>
        <begin position="22"/>
        <end position="38"/>
    </location>
</feature>
<feature type="compositionally biased region" description="Acidic residues" evidence="3">
    <location>
        <begin position="39"/>
        <end position="52"/>
    </location>
</feature>
<feature type="modified residue" description="Phosphoserine" evidence="5">
    <location>
        <position position="841"/>
    </location>
</feature>
<protein>
    <recommendedName>
        <fullName>SAC3 family protein 1</fullName>
    </recommendedName>
</protein>